<protein>
    <recommendedName>
        <fullName>Protein transport protein SEC13</fullName>
    </recommendedName>
</protein>
<sequence>MIHDAVLDYYGRRLATCSSDRTIKIFEVEGETHRLTETLKGHEGAVWCVAWAHPKYGNILASSGYDGKVFIWREQGGAWQKIFDFALHKASVNIVSWSPHESGCLLACASSDGHVSVLEFKDNSFDHQTFLAHGQGVNSVSWAPSTAPGSIISTNATPAAQRRFVTGGSDNTLKIWSWDAASAQYRCEEGGVLSGHTDWVLDVDWSPTVLQKSYIASASQDRTVRIWTSDSSNPGVWQSRVLKEFDTTVWRVSWSLSGNVLAVSSGDNKVTLWKENLKGEWACVNSLED</sequence>
<proteinExistence type="inferred from homology"/>
<accession>A4REK3</accession>
<accession>G4NB29</accession>
<comment type="function">
    <text evidence="2">Component of the coat protein complex II (COPII) which promotes the formation of transport vesicles from the endoplasmic reticulum (ER). The coat has two main functions, the physical deformation of the endoplasmic reticulum membrane into vesicles and the selection of cargo molecules. It also functions as a component of the nuclear pore complex (NPC). NPC components, collectively referred to as nucleoporins (NUPs), can play the role of both NPC structural components and of docking or interaction partners for transiently associated nuclear transport factors. SEC13 is required for efficient mRNA export from the nucleus to the cytoplasm and for correct nuclear pore biogenesis and distribution (By similarity).</text>
</comment>
<comment type="subunit">
    <text evidence="2">The COPII coat is composed of at least 5 proteins: the SEC23/24 complex, the SEC13/31 complex, and the protein SAR1. Component of the nuclear pore complex (NPC). NPC constitutes the exclusive means of nucleocytoplasmic transport. NPCs allow the passive diffusion of ions and small molecules and the active, nuclear transport receptor-mediated bidirectional transport of macromolecules such as proteins, RNAs, ribonucleoparticles (RNPs), and ribosomal subunits across the nuclear envelope. Due to its 8-fold rotational symmetry, all subunits are present with 8 copies or multiples thereof.</text>
</comment>
<comment type="subcellular location">
    <subcellularLocation>
        <location evidence="1">Cytoplasmic vesicle</location>
        <location evidence="1">COPII-coated vesicle membrane</location>
        <topology evidence="1">Peripheral membrane protein</topology>
        <orientation evidence="1">Cytoplasmic side</orientation>
    </subcellularLocation>
    <subcellularLocation>
        <location evidence="1">Endoplasmic reticulum membrane</location>
        <topology evidence="1">Peripheral membrane protein</topology>
        <orientation evidence="1">Cytoplasmic side</orientation>
    </subcellularLocation>
    <subcellularLocation>
        <location evidence="2">Nucleus</location>
        <location evidence="2">Nuclear pore complex</location>
    </subcellularLocation>
</comment>
<comment type="similarity">
    <text evidence="3">Belongs to the WD repeat SEC13 family.</text>
</comment>
<evidence type="ECO:0000250" key="1"/>
<evidence type="ECO:0000250" key="2">
    <source>
        <dbReference type="UniProtKB" id="Q04491"/>
    </source>
</evidence>
<evidence type="ECO:0000305" key="3"/>
<reference key="1">
    <citation type="journal article" date="2005" name="Nature">
        <title>The genome sequence of the rice blast fungus Magnaporthe grisea.</title>
        <authorList>
            <person name="Dean R.A."/>
            <person name="Talbot N.J."/>
            <person name="Ebbole D.J."/>
            <person name="Farman M.L."/>
            <person name="Mitchell T.K."/>
            <person name="Orbach M.J."/>
            <person name="Thon M.R."/>
            <person name="Kulkarni R."/>
            <person name="Xu J.-R."/>
            <person name="Pan H."/>
            <person name="Read N.D."/>
            <person name="Lee Y.-H."/>
            <person name="Carbone I."/>
            <person name="Brown D."/>
            <person name="Oh Y.Y."/>
            <person name="Donofrio N."/>
            <person name="Jeong J.S."/>
            <person name="Soanes D.M."/>
            <person name="Djonovic S."/>
            <person name="Kolomiets E."/>
            <person name="Rehmeyer C."/>
            <person name="Li W."/>
            <person name="Harding M."/>
            <person name="Kim S."/>
            <person name="Lebrun M.-H."/>
            <person name="Bohnert H."/>
            <person name="Coughlan S."/>
            <person name="Butler J."/>
            <person name="Calvo S.E."/>
            <person name="Ma L.-J."/>
            <person name="Nicol R."/>
            <person name="Purcell S."/>
            <person name="Nusbaum C."/>
            <person name="Galagan J.E."/>
            <person name="Birren B.W."/>
        </authorList>
    </citation>
    <scope>NUCLEOTIDE SEQUENCE [LARGE SCALE GENOMIC DNA]</scope>
    <source>
        <strain>70-15 / ATCC MYA-4617 / FGSC 8958</strain>
    </source>
</reference>
<name>SEC13_PYRO7</name>
<organism>
    <name type="scientific">Pyricularia oryzae (strain 70-15 / ATCC MYA-4617 / FGSC 8958)</name>
    <name type="common">Rice blast fungus</name>
    <name type="synonym">Magnaporthe oryzae</name>
    <dbReference type="NCBI Taxonomy" id="242507"/>
    <lineage>
        <taxon>Eukaryota</taxon>
        <taxon>Fungi</taxon>
        <taxon>Dikarya</taxon>
        <taxon>Ascomycota</taxon>
        <taxon>Pezizomycotina</taxon>
        <taxon>Sordariomycetes</taxon>
        <taxon>Sordariomycetidae</taxon>
        <taxon>Magnaporthales</taxon>
        <taxon>Pyriculariaceae</taxon>
        <taxon>Pyricularia</taxon>
    </lineage>
</organism>
<dbReference type="EMBL" id="CM001235">
    <property type="protein sequence ID" value="EHA48791.1"/>
    <property type="molecule type" value="Genomic_DNA"/>
</dbReference>
<dbReference type="RefSeq" id="XP_003718375.1">
    <property type="nucleotide sequence ID" value="XM_003718327.1"/>
</dbReference>
<dbReference type="SMR" id="A4REK3"/>
<dbReference type="FunCoup" id="A4REK3">
    <property type="interactions" value="1053"/>
</dbReference>
<dbReference type="STRING" id="242507.A4REK3"/>
<dbReference type="EnsemblFungi" id="MGG_14666T0">
    <property type="protein sequence ID" value="MGG_14666T0"/>
    <property type="gene ID" value="MGG_14666"/>
</dbReference>
<dbReference type="GeneID" id="5050789"/>
<dbReference type="KEGG" id="mgr:MGG_14666"/>
<dbReference type="VEuPathDB" id="FungiDB:MGG_14666"/>
<dbReference type="eggNOG" id="KOG1332">
    <property type="taxonomic scope" value="Eukaryota"/>
</dbReference>
<dbReference type="HOGENOM" id="CLU_032441_0_1_1"/>
<dbReference type="InParanoid" id="A4REK3"/>
<dbReference type="OMA" id="IWKEEGD"/>
<dbReference type="OrthoDB" id="364224at2759"/>
<dbReference type="Proteomes" id="UP000009058">
    <property type="component" value="Chromosome 5"/>
</dbReference>
<dbReference type="GO" id="GO:0030127">
    <property type="term" value="C:COPII vesicle coat"/>
    <property type="evidence" value="ECO:0007669"/>
    <property type="project" value="EnsemblFungi"/>
</dbReference>
<dbReference type="GO" id="GO:0005789">
    <property type="term" value="C:endoplasmic reticulum membrane"/>
    <property type="evidence" value="ECO:0007669"/>
    <property type="project" value="UniProtKB-SubCell"/>
</dbReference>
<dbReference type="GO" id="GO:0061700">
    <property type="term" value="C:GATOR2 complex"/>
    <property type="evidence" value="ECO:0007669"/>
    <property type="project" value="EnsemblFungi"/>
</dbReference>
<dbReference type="GO" id="GO:0031080">
    <property type="term" value="C:nuclear pore outer ring"/>
    <property type="evidence" value="ECO:0007669"/>
    <property type="project" value="EnsemblFungi"/>
</dbReference>
<dbReference type="GO" id="GO:0005198">
    <property type="term" value="F:structural molecule activity"/>
    <property type="evidence" value="ECO:0007669"/>
    <property type="project" value="EnsemblFungi"/>
</dbReference>
<dbReference type="GO" id="GO:0090114">
    <property type="term" value="P:COPII-coated vesicle budding"/>
    <property type="evidence" value="ECO:0007669"/>
    <property type="project" value="EnsemblFungi"/>
</dbReference>
<dbReference type="GO" id="GO:0036503">
    <property type="term" value="P:ERAD pathway"/>
    <property type="evidence" value="ECO:0007669"/>
    <property type="project" value="EnsemblFungi"/>
</dbReference>
<dbReference type="GO" id="GO:0051028">
    <property type="term" value="P:mRNA transport"/>
    <property type="evidence" value="ECO:0007669"/>
    <property type="project" value="UniProtKB-KW"/>
</dbReference>
<dbReference type="GO" id="GO:0051664">
    <property type="term" value="P:nuclear pore localization"/>
    <property type="evidence" value="ECO:0007669"/>
    <property type="project" value="EnsemblFungi"/>
</dbReference>
<dbReference type="GO" id="GO:0045893">
    <property type="term" value="P:positive regulation of DNA-templated transcription"/>
    <property type="evidence" value="ECO:0007669"/>
    <property type="project" value="EnsemblFungi"/>
</dbReference>
<dbReference type="GO" id="GO:1902953">
    <property type="term" value="P:positive regulation of ER to Golgi vesicle-mediated transport"/>
    <property type="evidence" value="ECO:0007669"/>
    <property type="project" value="EnsemblFungi"/>
</dbReference>
<dbReference type="GO" id="GO:0070863">
    <property type="term" value="P:positive regulation of protein exit from endoplasmic reticulum"/>
    <property type="evidence" value="ECO:0007669"/>
    <property type="project" value="EnsemblFungi"/>
</dbReference>
<dbReference type="GO" id="GO:1904263">
    <property type="term" value="P:positive regulation of TORC1 signaling"/>
    <property type="evidence" value="ECO:0007669"/>
    <property type="project" value="EnsemblFungi"/>
</dbReference>
<dbReference type="GO" id="GO:0032527">
    <property type="term" value="P:protein exit from endoplasmic reticulum"/>
    <property type="evidence" value="ECO:0007669"/>
    <property type="project" value="TreeGrafter"/>
</dbReference>
<dbReference type="GO" id="GO:0006606">
    <property type="term" value="P:protein import into nucleus"/>
    <property type="evidence" value="ECO:0007669"/>
    <property type="project" value="TreeGrafter"/>
</dbReference>
<dbReference type="CDD" id="cd00200">
    <property type="entry name" value="WD40"/>
    <property type="match status" value="1"/>
</dbReference>
<dbReference type="FunFam" id="2.130.10.10:FF:000017">
    <property type="entry name" value="SEC13 homolog (S. cerevisiae)"/>
    <property type="match status" value="1"/>
</dbReference>
<dbReference type="Gene3D" id="2.130.10.10">
    <property type="entry name" value="YVTN repeat-like/Quinoprotein amine dehydrogenase"/>
    <property type="match status" value="1"/>
</dbReference>
<dbReference type="InterPro" id="IPR020472">
    <property type="entry name" value="G-protein_beta_WD-40_rep"/>
</dbReference>
<dbReference type="InterPro" id="IPR037363">
    <property type="entry name" value="Sec13/Seh1_fam"/>
</dbReference>
<dbReference type="InterPro" id="IPR015943">
    <property type="entry name" value="WD40/YVTN_repeat-like_dom_sf"/>
</dbReference>
<dbReference type="InterPro" id="IPR036322">
    <property type="entry name" value="WD40_repeat_dom_sf"/>
</dbReference>
<dbReference type="InterPro" id="IPR001680">
    <property type="entry name" value="WD40_rpt"/>
</dbReference>
<dbReference type="PANTHER" id="PTHR11024">
    <property type="entry name" value="NUCLEAR PORE COMPLEX PROTEIN SEC13 / SEH1 FAMILY MEMBER"/>
    <property type="match status" value="1"/>
</dbReference>
<dbReference type="PANTHER" id="PTHR11024:SF2">
    <property type="entry name" value="PROTEIN SEC13 HOMOLOG"/>
    <property type="match status" value="1"/>
</dbReference>
<dbReference type="Pfam" id="PF00400">
    <property type="entry name" value="WD40"/>
    <property type="match status" value="6"/>
</dbReference>
<dbReference type="PRINTS" id="PR00320">
    <property type="entry name" value="GPROTEINBRPT"/>
</dbReference>
<dbReference type="SMART" id="SM00320">
    <property type="entry name" value="WD40"/>
    <property type="match status" value="5"/>
</dbReference>
<dbReference type="SUPFAM" id="SSF50978">
    <property type="entry name" value="WD40 repeat-like"/>
    <property type="match status" value="1"/>
</dbReference>
<dbReference type="PROSITE" id="PS50082">
    <property type="entry name" value="WD_REPEATS_2"/>
    <property type="match status" value="3"/>
</dbReference>
<dbReference type="PROSITE" id="PS50294">
    <property type="entry name" value="WD_REPEATS_REGION"/>
    <property type="match status" value="1"/>
</dbReference>
<feature type="chain" id="PRO_0000295418" description="Protein transport protein SEC13">
    <location>
        <begin position="1"/>
        <end position="289"/>
    </location>
</feature>
<feature type="repeat" description="WD 1">
    <location>
        <begin position="1"/>
        <end position="36"/>
    </location>
</feature>
<feature type="repeat" description="WD 2">
    <location>
        <begin position="41"/>
        <end position="82"/>
    </location>
</feature>
<feature type="repeat" description="WD 3">
    <location>
        <begin position="87"/>
        <end position="128"/>
    </location>
</feature>
<feature type="repeat" description="WD 4">
    <location>
        <begin position="132"/>
        <end position="186"/>
    </location>
</feature>
<feature type="repeat" description="WD 5">
    <location>
        <begin position="195"/>
        <end position="237"/>
    </location>
</feature>
<feature type="repeat" description="WD 6">
    <location>
        <begin position="244"/>
        <end position="283"/>
    </location>
</feature>
<gene>
    <name type="primary">SEC13</name>
    <name type="ORF">MGG_14666</name>
</gene>
<keyword id="KW-0968">Cytoplasmic vesicle</keyword>
<keyword id="KW-0256">Endoplasmic reticulum</keyword>
<keyword id="KW-0931">ER-Golgi transport</keyword>
<keyword id="KW-0472">Membrane</keyword>
<keyword id="KW-0509">mRNA transport</keyword>
<keyword id="KW-0906">Nuclear pore complex</keyword>
<keyword id="KW-0539">Nucleus</keyword>
<keyword id="KW-0653">Protein transport</keyword>
<keyword id="KW-1185">Reference proteome</keyword>
<keyword id="KW-0677">Repeat</keyword>
<keyword id="KW-0811">Translocation</keyword>
<keyword id="KW-0813">Transport</keyword>
<keyword id="KW-0853">WD repeat</keyword>